<sequence>MSMKISEKKFNDRVGDGIQDSFMRGAVSSAQTRLYTNRLKAADELGNWEEWRELGEEIRQHTLENLDYYLMQLSENVSKRGGHVYFAKTKEEAAKYIQDVAKKKQAKKVVKSKSMVTEEISMNHALEEIGCEVLESDLGEYILQVDNDPPSHIIAPALHKNRTQIRDVFKEKLGYENSDDPYEMTKFVRKQLREKFMDAEIGVTGCNFAVANTGSLCLVTNEGNADLVMSIPKTQIAVMGMERMVPTMEELDVLVGLLCRSAVGQKLTSYVTVAGPIQEEEVDGPEEFHLVVVDNGRSQILGSEFRQVLQCIRCAACVNVCPVYRHVGGHSYGSIYSGPIGAVLTPLLGGYDDYKELPYASSLCGACTEACPVKIPLHDLLLKHRQVIVEQEGRAPLAEKLAMKMFSMGASSAALYKMGSKMAPAAMSPFTSGNRVSKGVGPLKNWTDIREFPAPSKERFRDWYKDHKKGGDK</sequence>
<feature type="chain" id="PRO_0000383966" description="Lactate utilization protein B">
    <location>
        <begin position="1"/>
        <end position="473"/>
    </location>
</feature>
<feature type="domain" description="4Fe-4S ferredoxin-type 1" evidence="1">
    <location>
        <begin position="302"/>
        <end position="332"/>
    </location>
</feature>
<feature type="domain" description="4Fe-4S ferredoxin-type 2" evidence="1">
    <location>
        <begin position="351"/>
        <end position="380"/>
    </location>
</feature>
<feature type="binding site" evidence="1">
    <location>
        <position position="311"/>
    </location>
    <ligand>
        <name>[4Fe-4S] cluster</name>
        <dbReference type="ChEBI" id="CHEBI:49883"/>
        <label>1</label>
    </ligand>
</feature>
<feature type="binding site" evidence="1">
    <location>
        <position position="314"/>
    </location>
    <ligand>
        <name>[4Fe-4S] cluster</name>
        <dbReference type="ChEBI" id="CHEBI:49883"/>
        <label>1</label>
    </ligand>
</feature>
<feature type="binding site" evidence="1">
    <location>
        <position position="317"/>
    </location>
    <ligand>
        <name>[4Fe-4S] cluster</name>
        <dbReference type="ChEBI" id="CHEBI:49883"/>
        <label>1</label>
    </ligand>
</feature>
<feature type="binding site" evidence="1">
    <location>
        <position position="321"/>
    </location>
    <ligand>
        <name>[4Fe-4S] cluster</name>
        <dbReference type="ChEBI" id="CHEBI:49883"/>
        <label>2</label>
    </ligand>
</feature>
<feature type="binding site" evidence="1">
    <location>
        <position position="364"/>
    </location>
    <ligand>
        <name>[4Fe-4S] cluster</name>
        <dbReference type="ChEBI" id="CHEBI:49883"/>
        <label>2</label>
    </ligand>
</feature>
<feature type="binding site" evidence="1">
    <location>
        <position position="367"/>
    </location>
    <ligand>
        <name>[4Fe-4S] cluster</name>
        <dbReference type="ChEBI" id="CHEBI:49883"/>
        <label>2</label>
    </ligand>
</feature>
<feature type="binding site" evidence="1">
    <location>
        <position position="371"/>
    </location>
    <ligand>
        <name>[4Fe-4S] cluster</name>
        <dbReference type="ChEBI" id="CHEBI:49883"/>
        <label>1</label>
    </ligand>
</feature>
<gene>
    <name evidence="1" type="primary">lutB</name>
    <name type="ordered locus">BCA_1355</name>
</gene>
<protein>
    <recommendedName>
        <fullName evidence="1">Lactate utilization protein B</fullName>
    </recommendedName>
</protein>
<name>LUTB_BACC3</name>
<accession>C1EM11</accession>
<keyword id="KW-0004">4Fe-4S</keyword>
<keyword id="KW-0249">Electron transport</keyword>
<keyword id="KW-0408">Iron</keyword>
<keyword id="KW-0411">Iron-sulfur</keyword>
<keyword id="KW-0479">Metal-binding</keyword>
<keyword id="KW-0677">Repeat</keyword>
<keyword id="KW-0813">Transport</keyword>
<organism>
    <name type="scientific">Bacillus cereus (strain 03BB102)</name>
    <dbReference type="NCBI Taxonomy" id="572264"/>
    <lineage>
        <taxon>Bacteria</taxon>
        <taxon>Bacillati</taxon>
        <taxon>Bacillota</taxon>
        <taxon>Bacilli</taxon>
        <taxon>Bacillales</taxon>
        <taxon>Bacillaceae</taxon>
        <taxon>Bacillus</taxon>
        <taxon>Bacillus cereus group</taxon>
    </lineage>
</organism>
<proteinExistence type="inferred from homology"/>
<evidence type="ECO:0000255" key="1">
    <source>
        <dbReference type="HAMAP-Rule" id="MF_02103"/>
    </source>
</evidence>
<reference key="1">
    <citation type="submission" date="2009-02" db="EMBL/GenBank/DDBJ databases">
        <title>Genome sequence of Bacillus cereus 03BB102.</title>
        <authorList>
            <person name="Dodson R.J."/>
            <person name="Jackson P."/>
            <person name="Munk A.C."/>
            <person name="Brettin T."/>
            <person name="Bruce D."/>
            <person name="Detter C."/>
            <person name="Tapia R."/>
            <person name="Han C."/>
            <person name="Sutton G."/>
            <person name="Sims D."/>
        </authorList>
    </citation>
    <scope>NUCLEOTIDE SEQUENCE [LARGE SCALE GENOMIC DNA]</scope>
    <source>
        <strain>03BB102</strain>
    </source>
</reference>
<comment type="function">
    <text evidence="1">Is involved in L-lactate degradation and allows cells to grow with lactate as the sole carbon source. Has probably a role as an electron transporter during oxidation of L-lactate.</text>
</comment>
<comment type="similarity">
    <text evidence="1">Belongs to the LutB/YkgF family.</text>
</comment>
<dbReference type="EMBL" id="CP001407">
    <property type="protein sequence ID" value="ACO30080.1"/>
    <property type="molecule type" value="Genomic_DNA"/>
</dbReference>
<dbReference type="RefSeq" id="WP_000061914.1">
    <property type="nucleotide sequence ID" value="NZ_CP009318.1"/>
</dbReference>
<dbReference type="KEGG" id="bcx:BCA_1355"/>
<dbReference type="PATRIC" id="fig|572264.18.peg.1308"/>
<dbReference type="Proteomes" id="UP000002210">
    <property type="component" value="Chromosome"/>
</dbReference>
<dbReference type="GO" id="GO:0051539">
    <property type="term" value="F:4 iron, 4 sulfur cluster binding"/>
    <property type="evidence" value="ECO:0007669"/>
    <property type="project" value="UniProtKB-KW"/>
</dbReference>
<dbReference type="GO" id="GO:0046872">
    <property type="term" value="F:metal ion binding"/>
    <property type="evidence" value="ECO:0007669"/>
    <property type="project" value="UniProtKB-KW"/>
</dbReference>
<dbReference type="GO" id="GO:0006089">
    <property type="term" value="P:lactate metabolic process"/>
    <property type="evidence" value="ECO:0007669"/>
    <property type="project" value="UniProtKB-UniRule"/>
</dbReference>
<dbReference type="Gene3D" id="1.10.1060.10">
    <property type="entry name" value="Alpha-helical ferredoxin"/>
    <property type="match status" value="1"/>
</dbReference>
<dbReference type="Gene3D" id="3.40.50.10420">
    <property type="entry name" value="NagB/RpiA/CoA transferase-like"/>
    <property type="match status" value="1"/>
</dbReference>
<dbReference type="HAMAP" id="MF_02103">
    <property type="entry name" value="LutB"/>
    <property type="match status" value="1"/>
</dbReference>
<dbReference type="InterPro" id="IPR017896">
    <property type="entry name" value="4Fe4S_Fe-S-bd"/>
</dbReference>
<dbReference type="InterPro" id="IPR017900">
    <property type="entry name" value="4Fe4S_Fe_S_CS"/>
</dbReference>
<dbReference type="InterPro" id="IPR024185">
    <property type="entry name" value="FTHF_cligase-like_sf"/>
</dbReference>
<dbReference type="InterPro" id="IPR009051">
    <property type="entry name" value="Helical_ferredxn"/>
</dbReference>
<dbReference type="InterPro" id="IPR003741">
    <property type="entry name" value="LUD_dom"/>
</dbReference>
<dbReference type="InterPro" id="IPR022825">
    <property type="entry name" value="LutB"/>
</dbReference>
<dbReference type="InterPro" id="IPR004452">
    <property type="entry name" value="LutB/LldF"/>
</dbReference>
<dbReference type="InterPro" id="IPR024569">
    <property type="entry name" value="LutB_C"/>
</dbReference>
<dbReference type="InterPro" id="IPR037171">
    <property type="entry name" value="NagB/RpiA_transferase-like"/>
</dbReference>
<dbReference type="NCBIfam" id="TIGR00273">
    <property type="entry name" value="LutB/LldF family L-lactate oxidation iron-sulfur protein"/>
    <property type="match status" value="1"/>
</dbReference>
<dbReference type="PANTHER" id="PTHR47153">
    <property type="entry name" value="LACTATE UTILIZATION PROTEIN B"/>
    <property type="match status" value="1"/>
</dbReference>
<dbReference type="PANTHER" id="PTHR47153:SF2">
    <property type="entry name" value="LACTATE UTILIZATION PROTEIN B"/>
    <property type="match status" value="1"/>
</dbReference>
<dbReference type="Pfam" id="PF13183">
    <property type="entry name" value="Fer4_8"/>
    <property type="match status" value="1"/>
</dbReference>
<dbReference type="Pfam" id="PF02589">
    <property type="entry name" value="LUD_dom"/>
    <property type="match status" value="1"/>
</dbReference>
<dbReference type="Pfam" id="PF11870">
    <property type="entry name" value="LutB_C"/>
    <property type="match status" value="1"/>
</dbReference>
<dbReference type="SUPFAM" id="SSF46548">
    <property type="entry name" value="alpha-helical ferredoxin"/>
    <property type="match status" value="1"/>
</dbReference>
<dbReference type="SUPFAM" id="SSF100950">
    <property type="entry name" value="NagB/RpiA/CoA transferase-like"/>
    <property type="match status" value="1"/>
</dbReference>
<dbReference type="PROSITE" id="PS00198">
    <property type="entry name" value="4FE4S_FER_1"/>
    <property type="match status" value="1"/>
</dbReference>